<evidence type="ECO:0000255" key="1">
    <source>
        <dbReference type="HAMAP-Rule" id="MF_01092"/>
    </source>
</evidence>
<accession>B5R2N7</accession>
<dbReference type="EMBL" id="AM933172">
    <property type="protein sequence ID" value="CAR31731.1"/>
    <property type="molecule type" value="Genomic_DNA"/>
</dbReference>
<dbReference type="RefSeq" id="WP_000557441.1">
    <property type="nucleotide sequence ID" value="NC_011294.1"/>
</dbReference>
<dbReference type="SMR" id="B5R2N7"/>
<dbReference type="KEGG" id="set:SEN0143"/>
<dbReference type="HOGENOM" id="CLU_076303_0_0_6"/>
<dbReference type="Proteomes" id="UP000000613">
    <property type="component" value="Chromosome"/>
</dbReference>
<dbReference type="GO" id="GO:0032153">
    <property type="term" value="C:cell division site"/>
    <property type="evidence" value="ECO:0007669"/>
    <property type="project" value="TreeGrafter"/>
</dbReference>
<dbReference type="GO" id="GO:0005737">
    <property type="term" value="C:cytoplasm"/>
    <property type="evidence" value="ECO:0007669"/>
    <property type="project" value="UniProtKB-SubCell"/>
</dbReference>
<dbReference type="GO" id="GO:0000917">
    <property type="term" value="P:division septum assembly"/>
    <property type="evidence" value="ECO:0007669"/>
    <property type="project" value="UniProtKB-KW"/>
</dbReference>
<dbReference type="GO" id="GO:0043093">
    <property type="term" value="P:FtsZ-dependent cytokinesis"/>
    <property type="evidence" value="ECO:0007669"/>
    <property type="project" value="UniProtKB-UniRule"/>
</dbReference>
<dbReference type="FunFam" id="1.10.3900.10:FF:000001">
    <property type="entry name" value="Cell division protein ZapD"/>
    <property type="match status" value="1"/>
</dbReference>
<dbReference type="FunFam" id="2.60.440.10:FF:000001">
    <property type="entry name" value="Cell division protein ZapD"/>
    <property type="match status" value="1"/>
</dbReference>
<dbReference type="Gene3D" id="1.10.3900.10">
    <property type="entry name" value="YacF-like"/>
    <property type="match status" value="1"/>
</dbReference>
<dbReference type="Gene3D" id="2.60.440.10">
    <property type="entry name" value="YacF-like domains"/>
    <property type="match status" value="1"/>
</dbReference>
<dbReference type="HAMAP" id="MF_01092">
    <property type="entry name" value="ZapD"/>
    <property type="match status" value="1"/>
</dbReference>
<dbReference type="InterPro" id="IPR009777">
    <property type="entry name" value="ZapD"/>
</dbReference>
<dbReference type="InterPro" id="IPR027462">
    <property type="entry name" value="ZapD_C"/>
</dbReference>
<dbReference type="InterPro" id="IPR036268">
    <property type="entry name" value="ZapD_sf"/>
</dbReference>
<dbReference type="NCBIfam" id="NF003653">
    <property type="entry name" value="PRK05287.1-1"/>
    <property type="match status" value="1"/>
</dbReference>
<dbReference type="NCBIfam" id="NF003655">
    <property type="entry name" value="PRK05287.1-3"/>
    <property type="match status" value="1"/>
</dbReference>
<dbReference type="PANTHER" id="PTHR39455">
    <property type="entry name" value="CELL DIVISION PROTEIN ZAPD"/>
    <property type="match status" value="1"/>
</dbReference>
<dbReference type="PANTHER" id="PTHR39455:SF1">
    <property type="entry name" value="CELL DIVISION PROTEIN ZAPD"/>
    <property type="match status" value="1"/>
</dbReference>
<dbReference type="Pfam" id="PF07072">
    <property type="entry name" value="ZapD"/>
    <property type="match status" value="1"/>
</dbReference>
<dbReference type="SUPFAM" id="SSF160950">
    <property type="entry name" value="YacF-like"/>
    <property type="match status" value="1"/>
</dbReference>
<protein>
    <recommendedName>
        <fullName evidence="1">Cell division protein ZapD</fullName>
    </recommendedName>
    <alternativeName>
        <fullName evidence="1">Z ring-associated protein D</fullName>
    </alternativeName>
</protein>
<keyword id="KW-0131">Cell cycle</keyword>
<keyword id="KW-0132">Cell division</keyword>
<keyword id="KW-0963">Cytoplasm</keyword>
<keyword id="KW-0717">Septation</keyword>
<organism>
    <name type="scientific">Salmonella enteritidis PT4 (strain P125109)</name>
    <dbReference type="NCBI Taxonomy" id="550537"/>
    <lineage>
        <taxon>Bacteria</taxon>
        <taxon>Pseudomonadati</taxon>
        <taxon>Pseudomonadota</taxon>
        <taxon>Gammaproteobacteria</taxon>
        <taxon>Enterobacterales</taxon>
        <taxon>Enterobacteriaceae</taxon>
        <taxon>Salmonella</taxon>
    </lineage>
</organism>
<gene>
    <name evidence="1" type="primary">zapD</name>
    <name type="ordered locus">SEN0143</name>
</gene>
<proteinExistence type="inferred from homology"/>
<feature type="chain" id="PRO_1000136950" description="Cell division protein ZapD">
    <location>
        <begin position="1"/>
        <end position="247"/>
    </location>
</feature>
<name>ZAPD_SALEP</name>
<sequence>MHTQVLFEHPLNEKMRTWLRIEFLIQQLSINLPIADHAGALHFFRNISDLLDVFERGEVRTELLKELERQQRKLQAWVEVPGVDQDRIEALRQQLKSAGSVLISAPRIGQQLREDRLIALVRQRLSIPGGCCSFDLPTLHIWLHLQQAQRDAQIESWLASLNPLTQALTLVLDLIRNSAPFRKQTSLNGFYQDNGDDADLLRLMLTLDSQLYPQISGHKSRFAIRFMPLDSENGLVPERLDFELACC</sequence>
<reference key="1">
    <citation type="journal article" date="2008" name="Genome Res.">
        <title>Comparative genome analysis of Salmonella enteritidis PT4 and Salmonella gallinarum 287/91 provides insights into evolutionary and host adaptation pathways.</title>
        <authorList>
            <person name="Thomson N.R."/>
            <person name="Clayton D.J."/>
            <person name="Windhorst D."/>
            <person name="Vernikos G."/>
            <person name="Davidson S."/>
            <person name="Churcher C."/>
            <person name="Quail M.A."/>
            <person name="Stevens M."/>
            <person name="Jones M.A."/>
            <person name="Watson M."/>
            <person name="Barron A."/>
            <person name="Layton A."/>
            <person name="Pickard D."/>
            <person name="Kingsley R.A."/>
            <person name="Bignell A."/>
            <person name="Clark L."/>
            <person name="Harris B."/>
            <person name="Ormond D."/>
            <person name="Abdellah Z."/>
            <person name="Brooks K."/>
            <person name="Cherevach I."/>
            <person name="Chillingworth T."/>
            <person name="Woodward J."/>
            <person name="Norberczak H."/>
            <person name="Lord A."/>
            <person name="Arrowsmith C."/>
            <person name="Jagels K."/>
            <person name="Moule S."/>
            <person name="Mungall K."/>
            <person name="Saunders M."/>
            <person name="Whitehead S."/>
            <person name="Chabalgoity J.A."/>
            <person name="Maskell D."/>
            <person name="Humphreys T."/>
            <person name="Roberts M."/>
            <person name="Barrow P.A."/>
            <person name="Dougan G."/>
            <person name="Parkhill J."/>
        </authorList>
    </citation>
    <scope>NUCLEOTIDE SEQUENCE [LARGE SCALE GENOMIC DNA]</scope>
    <source>
        <strain>P125109</strain>
    </source>
</reference>
<comment type="function">
    <text evidence="1">Cell division factor that enhances FtsZ-ring assembly. Directly interacts with FtsZ and promotes bundling of FtsZ protofilaments, with a reduction in FtsZ GTPase activity.</text>
</comment>
<comment type="subunit">
    <text evidence="1">Interacts with FtsZ.</text>
</comment>
<comment type="subcellular location">
    <subcellularLocation>
        <location evidence="1">Cytoplasm</location>
    </subcellularLocation>
    <text evidence="1">Localizes to mid-cell in an FtsZ-dependent manner.</text>
</comment>
<comment type="similarity">
    <text evidence="1">Belongs to the ZapD family.</text>
</comment>